<evidence type="ECO:0000255" key="1">
    <source>
        <dbReference type="HAMAP-Rule" id="MF_01810"/>
    </source>
</evidence>
<evidence type="ECO:0000256" key="2">
    <source>
        <dbReference type="SAM" id="MobiDB-lite"/>
    </source>
</evidence>
<comment type="function">
    <text evidence="1">Required for the insertion and/or proper folding and/or complex formation of integral membrane proteins into the membrane. Involved in integration of membrane proteins that insert both dependently and independently of the Sec translocase complex, as well as at least some lipoproteins. Aids folding of multispanning membrane proteins.</text>
</comment>
<comment type="subunit">
    <text evidence="1">Interacts with the Sec translocase complex via SecD. Specifically interacts with transmembrane segments of nascent integral membrane proteins during membrane integration.</text>
</comment>
<comment type="subcellular location">
    <subcellularLocation>
        <location evidence="1">Cell inner membrane</location>
        <topology evidence="1">Multi-pass membrane protein</topology>
    </subcellularLocation>
</comment>
<comment type="similarity">
    <text evidence="1">Belongs to the OXA1/ALB3/YidC family. Type 1 subfamily.</text>
</comment>
<name>YIDC_CERS4</name>
<dbReference type="EMBL" id="CP000143">
    <property type="protein sequence ID" value="ABA80248.1"/>
    <property type="molecule type" value="Genomic_DNA"/>
</dbReference>
<dbReference type="RefSeq" id="WP_011338690.1">
    <property type="nucleotide sequence ID" value="NC_007493.2"/>
</dbReference>
<dbReference type="RefSeq" id="YP_354149.1">
    <property type="nucleotide sequence ID" value="NC_007493.2"/>
</dbReference>
<dbReference type="SMR" id="Q3IYY6"/>
<dbReference type="STRING" id="272943.RSP_1064"/>
<dbReference type="EnsemblBacteria" id="ABA80248">
    <property type="protein sequence ID" value="ABA80248"/>
    <property type="gene ID" value="RSP_1064"/>
</dbReference>
<dbReference type="GeneID" id="3720917"/>
<dbReference type="KEGG" id="rsp:RSP_1064"/>
<dbReference type="PATRIC" id="fig|272943.9.peg.3038"/>
<dbReference type="eggNOG" id="COG0706">
    <property type="taxonomic scope" value="Bacteria"/>
</dbReference>
<dbReference type="OrthoDB" id="9780552at2"/>
<dbReference type="PhylomeDB" id="Q3IYY6"/>
<dbReference type="Proteomes" id="UP000002703">
    <property type="component" value="Chromosome 1"/>
</dbReference>
<dbReference type="GO" id="GO:0005886">
    <property type="term" value="C:plasma membrane"/>
    <property type="evidence" value="ECO:0007669"/>
    <property type="project" value="UniProtKB-SubCell"/>
</dbReference>
<dbReference type="GO" id="GO:0032977">
    <property type="term" value="F:membrane insertase activity"/>
    <property type="evidence" value="ECO:0007669"/>
    <property type="project" value="InterPro"/>
</dbReference>
<dbReference type="GO" id="GO:0051205">
    <property type="term" value="P:protein insertion into membrane"/>
    <property type="evidence" value="ECO:0007669"/>
    <property type="project" value="TreeGrafter"/>
</dbReference>
<dbReference type="GO" id="GO:0015031">
    <property type="term" value="P:protein transport"/>
    <property type="evidence" value="ECO:0007669"/>
    <property type="project" value="UniProtKB-KW"/>
</dbReference>
<dbReference type="CDD" id="cd20070">
    <property type="entry name" value="5TM_YidC_Alb3"/>
    <property type="match status" value="1"/>
</dbReference>
<dbReference type="CDD" id="cd19961">
    <property type="entry name" value="EcYidC-like_peri"/>
    <property type="match status" value="1"/>
</dbReference>
<dbReference type="Gene3D" id="2.70.98.90">
    <property type="match status" value="1"/>
</dbReference>
<dbReference type="HAMAP" id="MF_01810">
    <property type="entry name" value="YidC_type1"/>
    <property type="match status" value="1"/>
</dbReference>
<dbReference type="InterPro" id="IPR019998">
    <property type="entry name" value="Membr_insert_YidC"/>
</dbReference>
<dbReference type="InterPro" id="IPR028053">
    <property type="entry name" value="Membr_insert_YidC_N"/>
</dbReference>
<dbReference type="InterPro" id="IPR001708">
    <property type="entry name" value="YidC/ALB3/OXA1/COX18"/>
</dbReference>
<dbReference type="InterPro" id="IPR028055">
    <property type="entry name" value="YidC/Oxa/ALB_C"/>
</dbReference>
<dbReference type="InterPro" id="IPR047196">
    <property type="entry name" value="YidC_ALB_C"/>
</dbReference>
<dbReference type="InterPro" id="IPR038221">
    <property type="entry name" value="YidC_periplasmic_sf"/>
</dbReference>
<dbReference type="NCBIfam" id="NF002353">
    <property type="entry name" value="PRK01318.1-4"/>
    <property type="match status" value="1"/>
</dbReference>
<dbReference type="NCBIfam" id="TIGR03593">
    <property type="entry name" value="yidC_nterm"/>
    <property type="match status" value="1"/>
</dbReference>
<dbReference type="NCBIfam" id="TIGR03592">
    <property type="entry name" value="yidC_oxa1_cterm"/>
    <property type="match status" value="1"/>
</dbReference>
<dbReference type="PANTHER" id="PTHR12428:SF65">
    <property type="entry name" value="CYTOCHROME C OXIDASE ASSEMBLY PROTEIN COX18, MITOCHONDRIAL"/>
    <property type="match status" value="1"/>
</dbReference>
<dbReference type="PANTHER" id="PTHR12428">
    <property type="entry name" value="OXA1"/>
    <property type="match status" value="1"/>
</dbReference>
<dbReference type="Pfam" id="PF02096">
    <property type="entry name" value="60KD_IMP"/>
    <property type="match status" value="1"/>
</dbReference>
<dbReference type="Pfam" id="PF14849">
    <property type="entry name" value="YidC_periplas"/>
    <property type="match status" value="1"/>
</dbReference>
<dbReference type="PRINTS" id="PR00701">
    <property type="entry name" value="60KDINNERMP"/>
</dbReference>
<dbReference type="PRINTS" id="PR01900">
    <property type="entry name" value="YIDCPROTEIN"/>
</dbReference>
<keyword id="KW-0997">Cell inner membrane</keyword>
<keyword id="KW-1003">Cell membrane</keyword>
<keyword id="KW-0143">Chaperone</keyword>
<keyword id="KW-0472">Membrane</keyword>
<keyword id="KW-0653">Protein transport</keyword>
<keyword id="KW-1185">Reference proteome</keyword>
<keyword id="KW-0812">Transmembrane</keyword>
<keyword id="KW-1133">Transmembrane helix</keyword>
<keyword id="KW-0813">Transport</keyword>
<proteinExistence type="inferred from homology"/>
<organism>
    <name type="scientific">Cereibacter sphaeroides (strain ATCC 17023 / DSM 158 / JCM 6121 / CCUG 31486 / LMG 2827 / NBRC 12203 / NCIMB 8253 / ATH 2.4.1.)</name>
    <name type="common">Rhodobacter sphaeroides</name>
    <dbReference type="NCBI Taxonomy" id="272943"/>
    <lineage>
        <taxon>Bacteria</taxon>
        <taxon>Pseudomonadati</taxon>
        <taxon>Pseudomonadota</taxon>
        <taxon>Alphaproteobacteria</taxon>
        <taxon>Rhodobacterales</taxon>
        <taxon>Paracoccaceae</taxon>
        <taxon>Cereibacter</taxon>
    </lineage>
</organism>
<protein>
    <recommendedName>
        <fullName evidence="1">Membrane protein insertase YidC</fullName>
    </recommendedName>
    <alternativeName>
        <fullName evidence="1">Foldase YidC</fullName>
    </alternativeName>
    <alternativeName>
        <fullName evidence="1">Membrane integrase YidC</fullName>
    </alternativeName>
    <alternativeName>
        <fullName evidence="1">Membrane protein YidC</fullName>
    </alternativeName>
</protein>
<sequence length="623" mass="68647">MDDQNKNLILATGLSFLVIMVWFFLFPPPEAVTEGEPTVATQQTAVAPSATPDAPTTAVPPDADLPETQRVVIDTPRLQGSISMLGGRLDDLSLKSYHETLDPQSQIVRLLSPVGQPNAYYALYGWTPAGALGYEDVPGANTTWTQVGSGALGVDQPVTLQWDNGKGLVFTRTISVDDHYMFSVAQTVENNSGQAVQLAPYGIVARHGKPLNLQNFFVLHEGVVGRADGKLTETKYDKVAELPQVAREGAQAEVIDAQQDGWIGFTDKYWMTTLIPQQGQPFTSVTKYVPGADIYQAETREQLVTVAPGATAEVSSRLFAGAKEWETIRAYQNEGATEPTEGAEPIPGFIDSIDWGWFFFLTKPIFTVLHWLNHMIGNMGLAIIALTFLLKALVLPLAYKSYVSMARMKELQPELEALRERAGDDKMLMQREMMRLYKEKQVNPAAGCLPILIQIPIFFSLYKVIFVTIELRHAPFFGWLKDLSAPDPSSIFNFFGLAPWAAPTPGTTMALIFIGALPILLGVSMWLQQKLNPAPGDKAQAMIFAWMPWVFMFMLGHFASGLVLYWIVNNLITFTQQYVIMRSHGHHPDIFGNIKASFSRKPAAQPAGKAANDGAAPAKKRKP</sequence>
<accession>Q3IYY6</accession>
<feature type="chain" id="PRO_1000070153" description="Membrane protein insertase YidC">
    <location>
        <begin position="1"/>
        <end position="623"/>
    </location>
</feature>
<feature type="transmembrane region" description="Helical" evidence="1">
    <location>
        <begin position="8"/>
        <end position="28"/>
    </location>
</feature>
<feature type="transmembrane region" description="Helical" evidence="1">
    <location>
        <begin position="379"/>
        <end position="399"/>
    </location>
</feature>
<feature type="transmembrane region" description="Helical" evidence="1">
    <location>
        <begin position="449"/>
        <end position="469"/>
    </location>
</feature>
<feature type="transmembrane region" description="Helical" evidence="1">
    <location>
        <begin position="507"/>
        <end position="527"/>
    </location>
</feature>
<feature type="transmembrane region" description="Helical" evidence="1">
    <location>
        <begin position="543"/>
        <end position="563"/>
    </location>
</feature>
<feature type="region of interest" description="Disordered" evidence="2">
    <location>
        <begin position="601"/>
        <end position="623"/>
    </location>
</feature>
<feature type="compositionally biased region" description="Low complexity" evidence="2">
    <location>
        <begin position="601"/>
        <end position="617"/>
    </location>
</feature>
<reference key="1">
    <citation type="submission" date="2005-09" db="EMBL/GenBank/DDBJ databases">
        <title>Complete sequence of chromosome 1 of Rhodobacter sphaeroides 2.4.1.</title>
        <authorList>
            <person name="Copeland A."/>
            <person name="Lucas S."/>
            <person name="Lapidus A."/>
            <person name="Barry K."/>
            <person name="Detter J.C."/>
            <person name="Glavina T."/>
            <person name="Hammon N."/>
            <person name="Israni S."/>
            <person name="Pitluck S."/>
            <person name="Richardson P."/>
            <person name="Mackenzie C."/>
            <person name="Choudhary M."/>
            <person name="Larimer F."/>
            <person name="Hauser L.J."/>
            <person name="Land M."/>
            <person name="Donohue T.J."/>
            <person name="Kaplan S."/>
        </authorList>
    </citation>
    <scope>NUCLEOTIDE SEQUENCE [LARGE SCALE GENOMIC DNA]</scope>
    <source>
        <strain>ATCC 17023 / DSM 158 / JCM 6121 / CCUG 31486 / LMG 2827 / NBRC 12203 / NCIMB 8253 / ATH 2.4.1.</strain>
    </source>
</reference>
<gene>
    <name evidence="1" type="primary">yidC</name>
    <name type="ordered locus">RHOS4_26800</name>
    <name type="ORF">RSP_1064</name>
</gene>